<reference evidence="7" key="1">
    <citation type="submission" date="2001-11" db="EMBL/GenBank/DDBJ databases">
        <title>Molecular cloning of Xenopus laevis phosphoinositide-3-kinase (regulatory subunit, polypeptide 1, P85 alpha).</title>
        <authorList>
            <person name="Al-Khalili O.K."/>
            <person name="Eaton D.C."/>
        </authorList>
    </citation>
    <scope>NUCLEOTIDE SEQUENCE [MRNA]</scope>
</reference>
<dbReference type="EMBL" id="AY062922">
    <property type="protein sequence ID" value="AAL68953.1"/>
    <property type="molecule type" value="mRNA"/>
</dbReference>
<dbReference type="SMR" id="Q8UUU2"/>
<dbReference type="GeneID" id="399202"/>
<dbReference type="KEGG" id="xla:399202"/>
<dbReference type="AGR" id="Xenbase:XB-GENE-6254212"/>
<dbReference type="CTD" id="399202"/>
<dbReference type="Xenbase" id="XB-GENE-6254212">
    <property type="gene designation" value="pik3r1.S"/>
</dbReference>
<dbReference type="OrthoDB" id="3175255at2759"/>
<dbReference type="Proteomes" id="UP000186698">
    <property type="component" value="Chromosome 1S"/>
</dbReference>
<dbReference type="Bgee" id="399202">
    <property type="expression patterns" value="Expressed in internal ear and 19 other cell types or tissues"/>
</dbReference>
<dbReference type="GO" id="GO:0005737">
    <property type="term" value="C:cytoplasm"/>
    <property type="evidence" value="ECO:0000250"/>
    <property type="project" value="UniProtKB"/>
</dbReference>
<dbReference type="GO" id="GO:0005634">
    <property type="term" value="C:nucleus"/>
    <property type="evidence" value="ECO:0000250"/>
    <property type="project" value="UniProtKB"/>
</dbReference>
<dbReference type="GO" id="GO:0005943">
    <property type="term" value="C:phosphatidylinositol 3-kinase complex, class IA"/>
    <property type="evidence" value="ECO:0000250"/>
    <property type="project" value="UniProtKB"/>
</dbReference>
<dbReference type="GO" id="GO:0046935">
    <property type="term" value="F:1-phosphatidylinositol-3-kinase regulator activity"/>
    <property type="evidence" value="ECO:0000318"/>
    <property type="project" value="GO_Central"/>
</dbReference>
<dbReference type="GO" id="GO:0043125">
    <property type="term" value="F:ErbB-3 class receptor binding"/>
    <property type="evidence" value="ECO:0000250"/>
    <property type="project" value="UniProtKB"/>
</dbReference>
<dbReference type="GO" id="GO:0005158">
    <property type="term" value="F:insulin receptor binding"/>
    <property type="evidence" value="ECO:0000250"/>
    <property type="project" value="UniProtKB"/>
</dbReference>
<dbReference type="GO" id="GO:0043560">
    <property type="term" value="F:insulin receptor substrate binding"/>
    <property type="evidence" value="ECO:0000250"/>
    <property type="project" value="UniProtKB"/>
</dbReference>
<dbReference type="GO" id="GO:0005159">
    <property type="term" value="F:insulin-like growth factor receptor binding"/>
    <property type="evidence" value="ECO:0000250"/>
    <property type="project" value="UniProtKB"/>
</dbReference>
<dbReference type="GO" id="GO:0035014">
    <property type="term" value="F:phosphatidylinositol 3-kinase regulator activity"/>
    <property type="evidence" value="ECO:0000250"/>
    <property type="project" value="UniProtKB"/>
</dbReference>
<dbReference type="GO" id="GO:0032869">
    <property type="term" value="P:cellular response to insulin stimulus"/>
    <property type="evidence" value="ECO:0000250"/>
    <property type="project" value="UniProtKB"/>
</dbReference>
<dbReference type="GO" id="GO:0008286">
    <property type="term" value="P:insulin receptor signaling pathway"/>
    <property type="evidence" value="ECO:0000250"/>
    <property type="project" value="UniProtKB"/>
</dbReference>
<dbReference type="GO" id="GO:0048009">
    <property type="term" value="P:insulin-like growth factor receptor signaling pathway"/>
    <property type="evidence" value="ECO:0000250"/>
    <property type="project" value="UniProtKB"/>
</dbReference>
<dbReference type="GO" id="GO:0001678">
    <property type="term" value="P:intracellular glucose homeostasis"/>
    <property type="evidence" value="ECO:0000250"/>
    <property type="project" value="UniProtKB"/>
</dbReference>
<dbReference type="GO" id="GO:0043066">
    <property type="term" value="P:negative regulation of apoptotic process"/>
    <property type="evidence" value="ECO:0000250"/>
    <property type="project" value="UniProtKB"/>
</dbReference>
<dbReference type="GO" id="GO:0046854">
    <property type="term" value="P:phosphatidylinositol phosphate biosynthetic process"/>
    <property type="evidence" value="ECO:0000250"/>
    <property type="project" value="UniProtKB"/>
</dbReference>
<dbReference type="GO" id="GO:1900103">
    <property type="term" value="P:positive regulation of endoplasmic reticulum unfolded protein response"/>
    <property type="evidence" value="ECO:0000250"/>
    <property type="project" value="UniProtKB"/>
</dbReference>
<dbReference type="GO" id="GO:0042307">
    <property type="term" value="P:positive regulation of protein import into nucleus"/>
    <property type="evidence" value="ECO:0000250"/>
    <property type="project" value="UniProtKB"/>
</dbReference>
<dbReference type="GO" id="GO:0033120">
    <property type="term" value="P:positive regulation of RNA splicing"/>
    <property type="evidence" value="ECO:0000250"/>
    <property type="project" value="UniProtKB"/>
</dbReference>
<dbReference type="GO" id="GO:0045944">
    <property type="term" value="P:positive regulation of transcription by RNA polymerase II"/>
    <property type="evidence" value="ECO:0000250"/>
    <property type="project" value="UniProtKB"/>
</dbReference>
<dbReference type="GO" id="GO:0050821">
    <property type="term" value="P:protein stabilization"/>
    <property type="evidence" value="ECO:0000250"/>
    <property type="project" value="UniProtKB"/>
</dbReference>
<dbReference type="GO" id="GO:0034976">
    <property type="term" value="P:response to endoplasmic reticulum stress"/>
    <property type="evidence" value="ECO:0000250"/>
    <property type="project" value="UniProtKB"/>
</dbReference>
<dbReference type="CDD" id="cd12924">
    <property type="entry name" value="iSH2_PIK3R1"/>
    <property type="match status" value="1"/>
</dbReference>
<dbReference type="CDD" id="cd04388">
    <property type="entry name" value="RhoGAP_p85"/>
    <property type="match status" value="1"/>
</dbReference>
<dbReference type="CDD" id="cd09930">
    <property type="entry name" value="SH2_cSH2_p85_like"/>
    <property type="match status" value="1"/>
</dbReference>
<dbReference type="CDD" id="cd09942">
    <property type="entry name" value="SH2_nSH2_p85_like"/>
    <property type="match status" value="1"/>
</dbReference>
<dbReference type="CDD" id="cd11910">
    <property type="entry name" value="SH3_PI3K_p85alpha"/>
    <property type="match status" value="1"/>
</dbReference>
<dbReference type="FunFam" id="1.10.555.10:FF:000035">
    <property type="entry name" value="Phosphatidylinositol 3-kinase regulatory subunit alpha"/>
    <property type="match status" value="1"/>
</dbReference>
<dbReference type="FunFam" id="3.30.505.10:FF:000006">
    <property type="entry name" value="Phosphatidylinositol 3-kinase regulatory subunit alpha"/>
    <property type="match status" value="1"/>
</dbReference>
<dbReference type="FunFam" id="3.30.505.10:FF:000014">
    <property type="entry name" value="Phosphatidylinositol 3-kinase regulatory subunit alpha"/>
    <property type="match status" value="1"/>
</dbReference>
<dbReference type="FunFam" id="2.30.30.40:FF:000075">
    <property type="entry name" value="phosphatidylinositol 3-kinase regulatory subunit alpha"/>
    <property type="match status" value="1"/>
</dbReference>
<dbReference type="FunFam" id="1.10.287.1490:FF:000001">
    <property type="entry name" value="Putative phosphatidylinositol 3-kinase regulatory subunit alpha"/>
    <property type="match status" value="1"/>
</dbReference>
<dbReference type="Gene3D" id="1.10.287.1490">
    <property type="match status" value="1"/>
</dbReference>
<dbReference type="Gene3D" id="1.10.555.10">
    <property type="entry name" value="Rho GTPase activation protein"/>
    <property type="match status" value="1"/>
</dbReference>
<dbReference type="Gene3D" id="3.30.505.10">
    <property type="entry name" value="SH2 domain"/>
    <property type="match status" value="2"/>
</dbReference>
<dbReference type="Gene3D" id="2.30.30.40">
    <property type="entry name" value="SH3 Domains"/>
    <property type="match status" value="1"/>
</dbReference>
<dbReference type="InterPro" id="IPR044124">
    <property type="entry name" value="ISH2_PIK3R1"/>
</dbReference>
<dbReference type="InterPro" id="IPR032498">
    <property type="entry name" value="PI3K_P85_iSH2"/>
</dbReference>
<dbReference type="InterPro" id="IPR035591">
    <property type="entry name" value="PI3K_p85alpha_SH3"/>
</dbReference>
<dbReference type="InterPro" id="IPR035020">
    <property type="entry name" value="PI3kinase_P85_cSH2"/>
</dbReference>
<dbReference type="InterPro" id="IPR035022">
    <property type="entry name" value="PI3kinase_P85_nSH2"/>
</dbReference>
<dbReference type="InterPro" id="IPR008936">
    <property type="entry name" value="Rho_GTPase_activation_prot"/>
</dbReference>
<dbReference type="InterPro" id="IPR000198">
    <property type="entry name" value="RhoGAP_dom"/>
</dbReference>
<dbReference type="InterPro" id="IPR000980">
    <property type="entry name" value="SH2"/>
</dbReference>
<dbReference type="InterPro" id="IPR036860">
    <property type="entry name" value="SH2_dom_sf"/>
</dbReference>
<dbReference type="InterPro" id="IPR036028">
    <property type="entry name" value="SH3-like_dom_sf"/>
</dbReference>
<dbReference type="InterPro" id="IPR001452">
    <property type="entry name" value="SH3_domain"/>
</dbReference>
<dbReference type="PANTHER" id="PTHR10155">
    <property type="entry name" value="PHOSPHATIDYLINOSITOL 3-KINASE REGULATORY SUBUNIT"/>
    <property type="match status" value="1"/>
</dbReference>
<dbReference type="PANTHER" id="PTHR10155:SF1">
    <property type="entry name" value="PHOSPHATIDYLINOSITOL 3-KINASE REGULATORY SUBUNIT BETA"/>
    <property type="match status" value="1"/>
</dbReference>
<dbReference type="Pfam" id="PF16454">
    <property type="entry name" value="PI3K_P85_iSH2"/>
    <property type="match status" value="1"/>
</dbReference>
<dbReference type="Pfam" id="PF00620">
    <property type="entry name" value="RhoGAP"/>
    <property type="match status" value="1"/>
</dbReference>
<dbReference type="Pfam" id="PF00017">
    <property type="entry name" value="SH2"/>
    <property type="match status" value="2"/>
</dbReference>
<dbReference type="PRINTS" id="PR00678">
    <property type="entry name" value="PI3KINASEP85"/>
</dbReference>
<dbReference type="PRINTS" id="PR00401">
    <property type="entry name" value="SH2DOMAIN"/>
</dbReference>
<dbReference type="SMART" id="SM00324">
    <property type="entry name" value="RhoGAP"/>
    <property type="match status" value="1"/>
</dbReference>
<dbReference type="SMART" id="SM00252">
    <property type="entry name" value="SH2"/>
    <property type="match status" value="2"/>
</dbReference>
<dbReference type="SMART" id="SM00326">
    <property type="entry name" value="SH3"/>
    <property type="match status" value="1"/>
</dbReference>
<dbReference type="SUPFAM" id="SSF48350">
    <property type="entry name" value="GTPase activation domain, GAP"/>
    <property type="match status" value="1"/>
</dbReference>
<dbReference type="SUPFAM" id="SSF55550">
    <property type="entry name" value="SH2 domain"/>
    <property type="match status" value="2"/>
</dbReference>
<dbReference type="SUPFAM" id="SSF50044">
    <property type="entry name" value="SH3-domain"/>
    <property type="match status" value="1"/>
</dbReference>
<dbReference type="PROSITE" id="PS50238">
    <property type="entry name" value="RHOGAP"/>
    <property type="match status" value="1"/>
</dbReference>
<dbReference type="PROSITE" id="PS50001">
    <property type="entry name" value="SH2"/>
    <property type="match status" value="2"/>
</dbReference>
<dbReference type="PROSITE" id="PS50002">
    <property type="entry name" value="SH3"/>
    <property type="match status" value="1"/>
</dbReference>
<accession>Q8UUU2</accession>
<comment type="function">
    <text evidence="1">Binds to activated (phosphorylated) protein-Tyr kinases, through its SH2 domain, and acts as an adapter, mediating the association of the p110 catalytic unit to the plasma membrane.</text>
</comment>
<comment type="subunit">
    <text evidence="1">Heterodimer of a p110 (catalytic) and a p85 (regulatory) subunits.</text>
</comment>
<comment type="similarity">
    <text evidence="2">Belongs to the PI3K p85 subunit family.</text>
</comment>
<evidence type="ECO:0000250" key="1"/>
<evidence type="ECO:0000250" key="2">
    <source>
        <dbReference type="UniProtKB" id="P27986"/>
    </source>
</evidence>
<evidence type="ECO:0000255" key="3">
    <source>
        <dbReference type="PROSITE-ProRule" id="PRU00172"/>
    </source>
</evidence>
<evidence type="ECO:0000255" key="4">
    <source>
        <dbReference type="PROSITE-ProRule" id="PRU00191"/>
    </source>
</evidence>
<evidence type="ECO:0000255" key="5">
    <source>
        <dbReference type="PROSITE-ProRule" id="PRU00192"/>
    </source>
</evidence>
<evidence type="ECO:0000256" key="6">
    <source>
        <dbReference type="SAM" id="MobiDB-lite"/>
    </source>
</evidence>
<evidence type="ECO:0000312" key="7">
    <source>
        <dbReference type="EMBL" id="AAL68953.1"/>
    </source>
</evidence>
<keyword id="KW-0343">GTPase activation</keyword>
<keyword id="KW-0597">Phosphoprotein</keyword>
<keyword id="KW-1185">Reference proteome</keyword>
<keyword id="KW-0677">Repeat</keyword>
<keyword id="KW-0727">SH2 domain</keyword>
<keyword id="KW-0728">SH3 domain</keyword>
<sequence>MSAEGYKYRALYPYKKEREEDIDLRVGDTLSVSRATLLALGCFAEGMEARPEQIGWLNGCNENTGQRGDFPGTYVEYLGRKRISPPTPKPRPPRPLPVAPGAARGEAEAQAFTLPDLAEQFSPPDIGPPVLIKLIEAIEKKGLESATLYRSQSSSSLTELRQILECDAASVDFEQFDIAILSDALKRYFLDLPHPVIPALMYSEMLSAARESISSDEYVQLLRKIIRCANVPQQYWLTLQYLLKHFFQLCQSSSKNLLSAKSLAEIFSPLLFRIQVSSSDSSEFSTQILEVLIASEWNEKQAAPALPPKPSKSTAVTNNGTNHVMSLQDAEWYWGDISREEVNEKLRDTTDGTFLVRDASTIMHGDYTLTLRKGGNNKLIKIFHRDGKYGFSDPLTFNSVVELITHYRNESLAQYNPKLDVKLLYPVSRFQQDQVVKEDSIDAVGKKLREYNVQFEEKNQEYDRLYEDYTRTSQEIQMKRTAIEAFNETIKIFEEQCQTQEKYSKEYIEKFRREGNEKEIQRLLHNYEKLKSRISEIVDSKRRLEEDLKKQTAENREIDKRMNSIKPDLIQLRKTRDQYLMWLTQKGVRQKKLNEWMGNENTEDQYSVVEEEDLPHQDERTWNVGNINRNQAENLLRGKRDGTFLVRESSKAGCFACSVMAEGEVKHCVINKTHTGFGFAEPYNLYSSLKELVLHYQYTSLVQHNDSLNVTLAHPVYAQQRR</sequence>
<proteinExistence type="evidence at transcript level"/>
<gene>
    <name type="primary">pik3r1-a</name>
</gene>
<feature type="chain" id="PRO_0000080761" description="Phosphatidylinositol 3-kinase regulatory subunit alpha">
    <location>
        <begin position="1"/>
        <end position="722"/>
    </location>
</feature>
<feature type="domain" description="SH3" evidence="5">
    <location>
        <begin position="3"/>
        <end position="80"/>
    </location>
</feature>
<feature type="domain" description="Rho-GAP" evidence="3">
    <location>
        <begin position="112"/>
        <end position="300"/>
    </location>
</feature>
<feature type="domain" description="SH2 1" evidence="4">
    <location>
        <begin position="332"/>
        <end position="427"/>
    </location>
</feature>
<feature type="domain" description="SH2 2" evidence="4">
    <location>
        <begin position="622"/>
        <end position="716"/>
    </location>
</feature>
<feature type="region of interest" description="Disordered" evidence="6">
    <location>
        <begin position="81"/>
        <end position="102"/>
    </location>
</feature>
<feature type="compositionally biased region" description="Pro residues" evidence="6">
    <location>
        <begin position="85"/>
        <end position="98"/>
    </location>
</feature>
<feature type="site" description="Arginine finger; crucial for GTP hydrolysis by stabilizing the transition state" evidence="3">
    <location>
        <position position="150"/>
    </location>
</feature>
<name>P85AA_XENLA</name>
<organism>
    <name type="scientific">Xenopus laevis</name>
    <name type="common">African clawed frog</name>
    <dbReference type="NCBI Taxonomy" id="8355"/>
    <lineage>
        <taxon>Eukaryota</taxon>
        <taxon>Metazoa</taxon>
        <taxon>Chordata</taxon>
        <taxon>Craniata</taxon>
        <taxon>Vertebrata</taxon>
        <taxon>Euteleostomi</taxon>
        <taxon>Amphibia</taxon>
        <taxon>Batrachia</taxon>
        <taxon>Anura</taxon>
        <taxon>Pipoidea</taxon>
        <taxon>Pipidae</taxon>
        <taxon>Xenopodinae</taxon>
        <taxon>Xenopus</taxon>
        <taxon>Xenopus</taxon>
    </lineage>
</organism>
<protein>
    <recommendedName>
        <fullName>Phosphatidylinositol 3-kinase regulatory subunit alpha</fullName>
        <shortName>PI3-kinase regulatory subunit alpha</shortName>
        <shortName>PI3K regulatory subunit alpha</shortName>
        <shortName>PtdIns-3-kinase regulatory subunit alpha</shortName>
    </recommendedName>
    <alternativeName>
        <fullName>Phosphatidylinositol 3-kinase 85 kDa regulatory subunit alpha</fullName>
        <shortName>PI3-kinase subunit p85-alpha</shortName>
        <shortName>PtdIns-3-kinase regulatory subunit p85-alpha</shortName>
    </alternativeName>
</protein>